<reference key="1">
    <citation type="journal article" date="2001" name="Science">
        <title>Comparative genomics of Listeria species.</title>
        <authorList>
            <person name="Glaser P."/>
            <person name="Frangeul L."/>
            <person name="Buchrieser C."/>
            <person name="Rusniok C."/>
            <person name="Amend A."/>
            <person name="Baquero F."/>
            <person name="Berche P."/>
            <person name="Bloecker H."/>
            <person name="Brandt P."/>
            <person name="Chakraborty T."/>
            <person name="Charbit A."/>
            <person name="Chetouani F."/>
            <person name="Couve E."/>
            <person name="de Daruvar A."/>
            <person name="Dehoux P."/>
            <person name="Domann E."/>
            <person name="Dominguez-Bernal G."/>
            <person name="Duchaud E."/>
            <person name="Durant L."/>
            <person name="Dussurget O."/>
            <person name="Entian K.-D."/>
            <person name="Fsihi H."/>
            <person name="Garcia-del Portillo F."/>
            <person name="Garrido P."/>
            <person name="Gautier L."/>
            <person name="Goebel W."/>
            <person name="Gomez-Lopez N."/>
            <person name="Hain T."/>
            <person name="Hauf J."/>
            <person name="Jackson D."/>
            <person name="Jones L.-M."/>
            <person name="Kaerst U."/>
            <person name="Kreft J."/>
            <person name="Kuhn M."/>
            <person name="Kunst F."/>
            <person name="Kurapkat G."/>
            <person name="Madueno E."/>
            <person name="Maitournam A."/>
            <person name="Mata Vicente J."/>
            <person name="Ng E."/>
            <person name="Nedjari H."/>
            <person name="Nordsiek G."/>
            <person name="Novella S."/>
            <person name="de Pablos B."/>
            <person name="Perez-Diaz J.-C."/>
            <person name="Purcell R."/>
            <person name="Remmel B."/>
            <person name="Rose M."/>
            <person name="Schlueter T."/>
            <person name="Simoes N."/>
            <person name="Tierrez A."/>
            <person name="Vazquez-Boland J.-A."/>
            <person name="Voss H."/>
            <person name="Wehland J."/>
            <person name="Cossart P."/>
        </authorList>
    </citation>
    <scope>NUCLEOTIDE SEQUENCE [LARGE SCALE GENOMIC DNA]</scope>
    <source>
        <strain>ATCC BAA-680 / CLIP 11262</strain>
    </source>
</reference>
<evidence type="ECO:0000250" key="1"/>
<evidence type="ECO:0000255" key="2"/>
<evidence type="ECO:0000305" key="3"/>
<organism>
    <name type="scientific">Listeria innocua serovar 6a (strain ATCC BAA-680 / CLIP 11262)</name>
    <dbReference type="NCBI Taxonomy" id="272626"/>
    <lineage>
        <taxon>Bacteria</taxon>
        <taxon>Bacillati</taxon>
        <taxon>Bacillota</taxon>
        <taxon>Bacilli</taxon>
        <taxon>Bacillales</taxon>
        <taxon>Listeriaceae</taxon>
        <taxon>Listeria</taxon>
    </lineage>
</organism>
<dbReference type="EC" id="6.3.4.19"/>
<dbReference type="EC" id="2.4.2.8"/>
<dbReference type="EMBL" id="AL596164">
    <property type="protein sequence ID" value="CAC95484.1"/>
    <property type="molecule type" value="Genomic_DNA"/>
</dbReference>
<dbReference type="PIR" id="AD1464">
    <property type="entry name" value="AD1464"/>
</dbReference>
<dbReference type="RefSeq" id="WP_010990297.1">
    <property type="nucleotide sequence ID" value="NC_003212.1"/>
</dbReference>
<dbReference type="SMR" id="Q92F56"/>
<dbReference type="STRING" id="272626.gene:17564563"/>
<dbReference type="GeneID" id="93233686"/>
<dbReference type="KEGG" id="lin:lin0251"/>
<dbReference type="eggNOG" id="COG0037">
    <property type="taxonomic scope" value="Bacteria"/>
</dbReference>
<dbReference type="eggNOG" id="COG0634">
    <property type="taxonomic scope" value="Bacteria"/>
</dbReference>
<dbReference type="HOGENOM" id="CLU_018869_0_1_9"/>
<dbReference type="OrthoDB" id="9807403at2"/>
<dbReference type="Proteomes" id="UP000002513">
    <property type="component" value="Chromosome"/>
</dbReference>
<dbReference type="GO" id="GO:0005737">
    <property type="term" value="C:cytoplasm"/>
    <property type="evidence" value="ECO:0007669"/>
    <property type="project" value="UniProtKB-SubCell"/>
</dbReference>
<dbReference type="GO" id="GO:0005524">
    <property type="term" value="F:ATP binding"/>
    <property type="evidence" value="ECO:0007669"/>
    <property type="project" value="UniProtKB-UniRule"/>
</dbReference>
<dbReference type="GO" id="GO:0052657">
    <property type="term" value="F:guanine phosphoribosyltransferase activity"/>
    <property type="evidence" value="ECO:0007669"/>
    <property type="project" value="RHEA"/>
</dbReference>
<dbReference type="GO" id="GO:0004422">
    <property type="term" value="F:hypoxanthine phosphoribosyltransferase activity"/>
    <property type="evidence" value="ECO:0007669"/>
    <property type="project" value="InterPro"/>
</dbReference>
<dbReference type="GO" id="GO:0046872">
    <property type="term" value="F:metal ion binding"/>
    <property type="evidence" value="ECO:0007669"/>
    <property type="project" value="UniProtKB-KW"/>
</dbReference>
<dbReference type="GO" id="GO:0032267">
    <property type="term" value="F:tRNA(Ile)-lysidine synthase activity"/>
    <property type="evidence" value="ECO:0007669"/>
    <property type="project" value="UniProtKB-EC"/>
</dbReference>
<dbReference type="GO" id="GO:0006166">
    <property type="term" value="P:purine ribonucleoside salvage"/>
    <property type="evidence" value="ECO:0007669"/>
    <property type="project" value="InterPro"/>
</dbReference>
<dbReference type="GO" id="GO:0006400">
    <property type="term" value="P:tRNA modification"/>
    <property type="evidence" value="ECO:0007669"/>
    <property type="project" value="UniProtKB-UniRule"/>
</dbReference>
<dbReference type="CDD" id="cd06223">
    <property type="entry name" value="PRTases_typeI"/>
    <property type="match status" value="1"/>
</dbReference>
<dbReference type="CDD" id="cd01992">
    <property type="entry name" value="TilS_N"/>
    <property type="match status" value="1"/>
</dbReference>
<dbReference type="FunFam" id="3.40.50.2020:FF:000006">
    <property type="entry name" value="Hypoxanthine phosphoribosyltransferase"/>
    <property type="match status" value="1"/>
</dbReference>
<dbReference type="Gene3D" id="3.30.465.60">
    <property type="match status" value="1"/>
</dbReference>
<dbReference type="Gene3D" id="3.40.50.2020">
    <property type="match status" value="1"/>
</dbReference>
<dbReference type="Gene3D" id="3.40.50.620">
    <property type="entry name" value="HUPs"/>
    <property type="match status" value="1"/>
</dbReference>
<dbReference type="HAMAP" id="MF_01161">
    <property type="entry name" value="tRNA_Ile_lys_synt"/>
    <property type="match status" value="1"/>
</dbReference>
<dbReference type="InterPro" id="IPR005904">
    <property type="entry name" value="Hxn_phspho_trans"/>
</dbReference>
<dbReference type="InterPro" id="IPR012796">
    <property type="entry name" value="Lysidine-tRNA-synth_C"/>
</dbReference>
<dbReference type="InterPro" id="IPR000836">
    <property type="entry name" value="PRibTrfase_dom"/>
</dbReference>
<dbReference type="InterPro" id="IPR029057">
    <property type="entry name" value="PRTase-like"/>
</dbReference>
<dbReference type="InterPro" id="IPR014729">
    <property type="entry name" value="Rossmann-like_a/b/a_fold"/>
</dbReference>
<dbReference type="InterPro" id="IPR011063">
    <property type="entry name" value="TilS/TtcA_N"/>
</dbReference>
<dbReference type="InterPro" id="IPR012094">
    <property type="entry name" value="tRNA_Ile_lys_synt"/>
</dbReference>
<dbReference type="InterPro" id="IPR012795">
    <property type="entry name" value="tRNA_Ile_lys_synt_N"/>
</dbReference>
<dbReference type="NCBIfam" id="TIGR01203">
    <property type="entry name" value="HGPRTase"/>
    <property type="match status" value="1"/>
</dbReference>
<dbReference type="NCBIfam" id="TIGR02433">
    <property type="entry name" value="lysidine_TilS_C"/>
    <property type="match status" value="1"/>
</dbReference>
<dbReference type="NCBIfam" id="TIGR02432">
    <property type="entry name" value="lysidine_TilS_N"/>
    <property type="match status" value="1"/>
</dbReference>
<dbReference type="PANTHER" id="PTHR43033">
    <property type="entry name" value="TRNA(ILE)-LYSIDINE SYNTHASE-RELATED"/>
    <property type="match status" value="1"/>
</dbReference>
<dbReference type="PANTHER" id="PTHR43033:SF1">
    <property type="entry name" value="TRNA(ILE)-LYSIDINE SYNTHASE-RELATED"/>
    <property type="match status" value="1"/>
</dbReference>
<dbReference type="Pfam" id="PF01171">
    <property type="entry name" value="ATP_bind_3"/>
    <property type="match status" value="1"/>
</dbReference>
<dbReference type="Pfam" id="PF00156">
    <property type="entry name" value="Pribosyltran"/>
    <property type="match status" value="1"/>
</dbReference>
<dbReference type="Pfam" id="PF11734">
    <property type="entry name" value="TilS_C"/>
    <property type="match status" value="1"/>
</dbReference>
<dbReference type="SMART" id="SM00977">
    <property type="entry name" value="TilS_C"/>
    <property type="match status" value="1"/>
</dbReference>
<dbReference type="SUPFAM" id="SSF52402">
    <property type="entry name" value="Adenine nucleotide alpha hydrolases-like"/>
    <property type="match status" value="1"/>
</dbReference>
<dbReference type="SUPFAM" id="SSF82829">
    <property type="entry name" value="MesJ substrate recognition domain-like"/>
    <property type="match status" value="1"/>
</dbReference>
<dbReference type="SUPFAM" id="SSF56037">
    <property type="entry name" value="PheT/TilS domain"/>
    <property type="match status" value="1"/>
</dbReference>
<dbReference type="SUPFAM" id="SSF53271">
    <property type="entry name" value="PRTase-like"/>
    <property type="match status" value="1"/>
</dbReference>
<dbReference type="PROSITE" id="PS00103">
    <property type="entry name" value="PUR_PYR_PR_TRANSFER"/>
    <property type="match status" value="1"/>
</dbReference>
<keyword id="KW-0067">ATP-binding</keyword>
<keyword id="KW-0963">Cytoplasm</keyword>
<keyword id="KW-0328">Glycosyltransferase</keyword>
<keyword id="KW-0436">Ligase</keyword>
<keyword id="KW-0460">Magnesium</keyword>
<keyword id="KW-0479">Metal-binding</keyword>
<keyword id="KW-0547">Nucleotide-binding</keyword>
<keyword id="KW-0808">Transferase</keyword>
<keyword id="KW-0819">tRNA processing</keyword>
<comment type="function">
    <text evidence="1">Ligates lysine onto the cytidine present at position 34 of the AUA codon-specific tRNA(Ile) that contains the anticodon CAU, in an ATP-dependent manner. Cytidine is converted to lysidine, thus changing the amino acid specificity of the tRNA from methionine to isoleucine (By similarity).</text>
</comment>
<comment type="catalytic activity">
    <reaction>
        <text>IMP + diphosphate = hypoxanthine + 5-phospho-alpha-D-ribose 1-diphosphate</text>
        <dbReference type="Rhea" id="RHEA:17973"/>
        <dbReference type="ChEBI" id="CHEBI:17368"/>
        <dbReference type="ChEBI" id="CHEBI:33019"/>
        <dbReference type="ChEBI" id="CHEBI:58017"/>
        <dbReference type="ChEBI" id="CHEBI:58053"/>
        <dbReference type="EC" id="2.4.2.8"/>
    </reaction>
</comment>
<comment type="catalytic activity">
    <reaction>
        <text>GMP + diphosphate = guanine + 5-phospho-alpha-D-ribose 1-diphosphate</text>
        <dbReference type="Rhea" id="RHEA:25424"/>
        <dbReference type="ChEBI" id="CHEBI:16235"/>
        <dbReference type="ChEBI" id="CHEBI:33019"/>
        <dbReference type="ChEBI" id="CHEBI:58017"/>
        <dbReference type="ChEBI" id="CHEBI:58115"/>
        <dbReference type="EC" id="2.4.2.8"/>
    </reaction>
</comment>
<comment type="catalytic activity">
    <reaction>
        <text>cytidine(34) in tRNA(Ile2) + L-lysine + ATP = lysidine(34) in tRNA(Ile2) + AMP + diphosphate + H(+)</text>
        <dbReference type="Rhea" id="RHEA:43744"/>
        <dbReference type="Rhea" id="RHEA-COMP:10625"/>
        <dbReference type="Rhea" id="RHEA-COMP:10670"/>
        <dbReference type="ChEBI" id="CHEBI:15378"/>
        <dbReference type="ChEBI" id="CHEBI:30616"/>
        <dbReference type="ChEBI" id="CHEBI:32551"/>
        <dbReference type="ChEBI" id="CHEBI:33019"/>
        <dbReference type="ChEBI" id="CHEBI:82748"/>
        <dbReference type="ChEBI" id="CHEBI:83665"/>
        <dbReference type="ChEBI" id="CHEBI:456215"/>
        <dbReference type="EC" id="6.3.4.19"/>
    </reaction>
</comment>
<comment type="cofactor">
    <cofactor evidence="1">
        <name>Mg(2+)</name>
        <dbReference type="ChEBI" id="CHEBI:18420"/>
    </cofactor>
    <text evidence="1">Binds 2 magnesium ions per subunit. One of the ions does not make direct protein contacts.</text>
</comment>
<comment type="subcellular location">
    <subcellularLocation>
        <location evidence="1">Cytoplasm</location>
    </subcellularLocation>
</comment>
<comment type="domain">
    <text>The N-terminal region contains the highly conserved SGGXDS motif, predicted to be a P-loop motif involved in ATP binding.</text>
</comment>
<comment type="similarity">
    <text evidence="3">In the N-terminal section; belongs to the tRNA(Ile)-lysidine synthase family.</text>
</comment>
<comment type="similarity">
    <text evidence="3">In the C-terminal section; belongs to the purine/pyrimidine phosphoribosyltransferase family.</text>
</comment>
<sequence length="648" mass="74527">MDDTKKRIHKYIEKHDLIRSDDKLLVAVSGGPDSFALLHFLWSANLVPKEAIAVAHLNHHLRENAEKEQLAVQTFCEERDIPFFIEEVDVKKRAEKLQKGIEETARIVRYDFFEKVMAENNINKLVLAHHADDQIETILMRLVRGSSSIGWSGIQPKREVRGGYAIRPFLPITKAEIIEYATKHALPYEIDESNTSQEYTRNRYRTQLLPFLSKENPAVYEHFKRFSEETSEDFQFLEELASNLLKKNLIQNGKQSTLLLSDFKNEANPLQRRAIHLLLMYLYNDDGRVITVNHIYQIIQMIQSENPSSSIDLPKKLTVIRSYNELHFQFGERHAPPEFYHQLELNDRIELDNKASIRLKLKSSVVQTNGLNGMLLDAEDITLPLIVRNRVNGDRMTMKGQAGSKKLKDIFIDAKIPRQERDNLPVITDYTGKILWVPGVKKSAYDREFSRSKKQYIIRYTRNIGGNESMHNDIQKVLISEDELQEKIRELGRELTAEYEGRNPLVVGVLKGATPFMTDLLKRIDTYLEMDFMDVSSYGNGTVSSGEVKIIKDLNASVEGRDVLIIEDIIDSGRTLSYLVDLIKYRKAKSVKLVTLLDKPAGRNVAIEADYVGFVVPNEFVVGYGLDYAERYRNLPYIGILKPEIYSE</sequence>
<protein>
    <recommendedName>
        <fullName>Bifunctional protein TilS/HprT</fullName>
    </recommendedName>
    <domain>
        <recommendedName>
            <fullName>tRNA(Ile)-lysidine synthase</fullName>
            <ecNumber>6.3.4.19</ecNumber>
        </recommendedName>
        <alternativeName>
            <fullName>tRNA(Ile)-2-lysyl-cytidine synthase</fullName>
        </alternativeName>
        <alternativeName>
            <fullName>tRNA(Ile)-lysidine synthetase</fullName>
        </alternativeName>
    </domain>
    <domain>
        <recommendedName>
            <fullName>Hypoxanthine-guanine phosphoribosyltransferase</fullName>
            <shortName>HGPRT</shortName>
            <shortName>HGPRTase</shortName>
            <ecNumber>2.4.2.8</ecNumber>
        </recommendedName>
    </domain>
</protein>
<name>TILS_LISIN</name>
<gene>
    <name type="primary">tilS/hprT</name>
    <name type="ordered locus">lin0251</name>
</gene>
<proteinExistence type="inferred from homology"/>
<feature type="chain" id="PRO_0000181716" description="Bifunctional protein TilS/HprT">
    <location>
        <begin position="1"/>
        <end position="648"/>
    </location>
</feature>
<feature type="binding site" evidence="2">
    <location>
        <begin position="29"/>
        <end position="34"/>
    </location>
    <ligand>
        <name>ATP</name>
        <dbReference type="ChEBI" id="CHEBI:30616"/>
    </ligand>
</feature>
<feature type="binding site" evidence="1">
    <location>
        <position position="627"/>
    </location>
    <ligand>
        <name>Mg(2+)</name>
        <dbReference type="ChEBI" id="CHEBI:18420"/>
        <label>1</label>
    </ligand>
</feature>
<accession>Q92F56</accession>